<dbReference type="EMBL" id="AL954747">
    <property type="protein sequence ID" value="CAD85960.1"/>
    <property type="status" value="ALT_INIT"/>
    <property type="molecule type" value="Genomic_DNA"/>
</dbReference>
<dbReference type="RefSeq" id="WP_011112562.1">
    <property type="nucleotide sequence ID" value="NC_004757.1"/>
</dbReference>
<dbReference type="SMR" id="Q82T72"/>
<dbReference type="STRING" id="228410.NE2049"/>
<dbReference type="GeneID" id="87105186"/>
<dbReference type="KEGG" id="neu:NE2049"/>
<dbReference type="eggNOG" id="COG0081">
    <property type="taxonomic scope" value="Bacteria"/>
</dbReference>
<dbReference type="HOGENOM" id="CLU_062853_0_0_4"/>
<dbReference type="OrthoDB" id="9803740at2"/>
<dbReference type="PhylomeDB" id="Q82T72"/>
<dbReference type="Proteomes" id="UP000001416">
    <property type="component" value="Chromosome"/>
</dbReference>
<dbReference type="GO" id="GO:0022625">
    <property type="term" value="C:cytosolic large ribosomal subunit"/>
    <property type="evidence" value="ECO:0007669"/>
    <property type="project" value="TreeGrafter"/>
</dbReference>
<dbReference type="GO" id="GO:0019843">
    <property type="term" value="F:rRNA binding"/>
    <property type="evidence" value="ECO:0007669"/>
    <property type="project" value="UniProtKB-UniRule"/>
</dbReference>
<dbReference type="GO" id="GO:0003735">
    <property type="term" value="F:structural constituent of ribosome"/>
    <property type="evidence" value="ECO:0007669"/>
    <property type="project" value="InterPro"/>
</dbReference>
<dbReference type="GO" id="GO:0000049">
    <property type="term" value="F:tRNA binding"/>
    <property type="evidence" value="ECO:0007669"/>
    <property type="project" value="UniProtKB-KW"/>
</dbReference>
<dbReference type="GO" id="GO:0006417">
    <property type="term" value="P:regulation of translation"/>
    <property type="evidence" value="ECO:0007669"/>
    <property type="project" value="UniProtKB-KW"/>
</dbReference>
<dbReference type="GO" id="GO:0006412">
    <property type="term" value="P:translation"/>
    <property type="evidence" value="ECO:0007669"/>
    <property type="project" value="UniProtKB-UniRule"/>
</dbReference>
<dbReference type="CDD" id="cd00403">
    <property type="entry name" value="Ribosomal_L1"/>
    <property type="match status" value="1"/>
</dbReference>
<dbReference type="FunFam" id="3.40.50.790:FF:000001">
    <property type="entry name" value="50S ribosomal protein L1"/>
    <property type="match status" value="1"/>
</dbReference>
<dbReference type="Gene3D" id="3.30.190.20">
    <property type="match status" value="1"/>
</dbReference>
<dbReference type="Gene3D" id="3.40.50.790">
    <property type="match status" value="1"/>
</dbReference>
<dbReference type="HAMAP" id="MF_01318_B">
    <property type="entry name" value="Ribosomal_uL1_B"/>
    <property type="match status" value="1"/>
</dbReference>
<dbReference type="InterPro" id="IPR005878">
    <property type="entry name" value="Ribosom_uL1_bac-type"/>
</dbReference>
<dbReference type="InterPro" id="IPR002143">
    <property type="entry name" value="Ribosomal_uL1"/>
</dbReference>
<dbReference type="InterPro" id="IPR023674">
    <property type="entry name" value="Ribosomal_uL1-like"/>
</dbReference>
<dbReference type="InterPro" id="IPR028364">
    <property type="entry name" value="Ribosomal_uL1/biogenesis"/>
</dbReference>
<dbReference type="InterPro" id="IPR016095">
    <property type="entry name" value="Ribosomal_uL1_3-a/b-sand"/>
</dbReference>
<dbReference type="InterPro" id="IPR023673">
    <property type="entry name" value="Ribosomal_uL1_CS"/>
</dbReference>
<dbReference type="NCBIfam" id="TIGR01169">
    <property type="entry name" value="rplA_bact"/>
    <property type="match status" value="1"/>
</dbReference>
<dbReference type="PANTHER" id="PTHR36427">
    <property type="entry name" value="54S RIBOSOMAL PROTEIN L1, MITOCHONDRIAL"/>
    <property type="match status" value="1"/>
</dbReference>
<dbReference type="PANTHER" id="PTHR36427:SF3">
    <property type="entry name" value="LARGE RIBOSOMAL SUBUNIT PROTEIN UL1M"/>
    <property type="match status" value="1"/>
</dbReference>
<dbReference type="Pfam" id="PF00687">
    <property type="entry name" value="Ribosomal_L1"/>
    <property type="match status" value="1"/>
</dbReference>
<dbReference type="PIRSF" id="PIRSF002155">
    <property type="entry name" value="Ribosomal_L1"/>
    <property type="match status" value="1"/>
</dbReference>
<dbReference type="SUPFAM" id="SSF56808">
    <property type="entry name" value="Ribosomal protein L1"/>
    <property type="match status" value="1"/>
</dbReference>
<dbReference type="PROSITE" id="PS01199">
    <property type="entry name" value="RIBOSOMAL_L1"/>
    <property type="match status" value="1"/>
</dbReference>
<feature type="chain" id="PRO_0000125700" description="Large ribosomal subunit protein uL1">
    <location>
        <begin position="1"/>
        <end position="230"/>
    </location>
</feature>
<protein>
    <recommendedName>
        <fullName evidence="1">Large ribosomal subunit protein uL1</fullName>
    </recommendedName>
    <alternativeName>
        <fullName evidence="2">50S ribosomal protein L1</fullName>
    </alternativeName>
</protein>
<reference key="1">
    <citation type="journal article" date="2003" name="J. Bacteriol.">
        <title>Complete genome sequence of the ammonia-oxidizing bacterium and obligate chemolithoautotroph Nitrosomonas europaea.</title>
        <authorList>
            <person name="Chain P."/>
            <person name="Lamerdin J.E."/>
            <person name="Larimer F.W."/>
            <person name="Regala W."/>
            <person name="Lao V."/>
            <person name="Land M.L."/>
            <person name="Hauser L."/>
            <person name="Hooper A.B."/>
            <person name="Klotz M.G."/>
            <person name="Norton J."/>
            <person name="Sayavedra-Soto L.A."/>
            <person name="Arciero D.M."/>
            <person name="Hommes N.G."/>
            <person name="Whittaker M.M."/>
            <person name="Arp D.J."/>
        </authorList>
    </citation>
    <scope>NUCLEOTIDE SEQUENCE [LARGE SCALE GENOMIC DNA]</scope>
    <source>
        <strain>ATCC 19718 / CIP 103999 / KCTC 2705 / NBRC 14298</strain>
    </source>
</reference>
<comment type="function">
    <text evidence="1">Binds directly to 23S rRNA. The L1 stalk is quite mobile in the ribosome, and is involved in E site tRNA release.</text>
</comment>
<comment type="function">
    <text evidence="1">Protein L1 is also a translational repressor protein, it controls the translation of the L11 operon by binding to its mRNA.</text>
</comment>
<comment type="subunit">
    <text evidence="1">Part of the 50S ribosomal subunit.</text>
</comment>
<comment type="similarity">
    <text evidence="1">Belongs to the universal ribosomal protein uL1 family.</text>
</comment>
<comment type="sequence caution" evidence="2">
    <conflict type="erroneous initiation">
        <sequence resource="EMBL-CDS" id="CAD85960"/>
    </conflict>
</comment>
<evidence type="ECO:0000255" key="1">
    <source>
        <dbReference type="HAMAP-Rule" id="MF_01318"/>
    </source>
</evidence>
<evidence type="ECO:0000305" key="2"/>
<keyword id="KW-1185">Reference proteome</keyword>
<keyword id="KW-0678">Repressor</keyword>
<keyword id="KW-0687">Ribonucleoprotein</keyword>
<keyword id="KW-0689">Ribosomal protein</keyword>
<keyword id="KW-0694">RNA-binding</keyword>
<keyword id="KW-0699">rRNA-binding</keyword>
<keyword id="KW-0810">Translation regulation</keyword>
<keyword id="KW-0820">tRNA-binding</keyword>
<organism>
    <name type="scientific">Nitrosomonas europaea (strain ATCC 19718 / CIP 103999 / KCTC 2705 / NBRC 14298)</name>
    <dbReference type="NCBI Taxonomy" id="228410"/>
    <lineage>
        <taxon>Bacteria</taxon>
        <taxon>Pseudomonadati</taxon>
        <taxon>Pseudomonadota</taxon>
        <taxon>Betaproteobacteria</taxon>
        <taxon>Nitrosomonadales</taxon>
        <taxon>Nitrosomonadaceae</taxon>
        <taxon>Nitrosomonas</taxon>
    </lineage>
</organism>
<gene>
    <name evidence="1" type="primary">rplA</name>
    <name type="ordered locus">NE2049</name>
</gene>
<accession>Q82T72</accession>
<name>RL1_NITEU</name>
<proteinExistence type="inferred from homology"/>
<sequence>MAKTSKRYREIVQKIDRSQLYSLVDALALVKETAVAKFDESVDIAINLGIDVRKSDQVVRGSVVLPSGTGKSVRVAVFAQGDKAKEALDAGADIVGFEDLAERVKAGEINFDLAIASPDAMRVVGQLGQILGPRGLMPNPKVGTVTVDVINAIRNAKAGQVQFRADKAGIVHCTVGRASFDVEALRANIMALVDALNKSKPTTSKGVYLRKMAISSTMGVGVRVDHTAIV</sequence>